<keyword id="KW-0378">Hydrolase</keyword>
<keyword id="KW-0408">Iron</keyword>
<keyword id="KW-0479">Metal-binding</keyword>
<keyword id="KW-0648">Protein biosynthesis</keyword>
<keyword id="KW-1185">Reference proteome</keyword>
<gene>
    <name evidence="1" type="primary">def</name>
    <name type="ordered locus">MYPE5650</name>
</gene>
<name>DEF_MALP2</name>
<protein>
    <recommendedName>
        <fullName evidence="1">Peptide deformylase</fullName>
        <shortName evidence="1">PDF</shortName>
        <ecNumber evidence="1">3.5.1.88</ecNumber>
    </recommendedName>
    <alternativeName>
        <fullName evidence="1">Polypeptide deformylase</fullName>
    </alternativeName>
</protein>
<sequence>MFKKLDPSPKWIVYDNNPVMHKPIEDVVFPLTKEDEHVISQMLSYVDASYEGEADKYDIRAGIGIAAIQLGCPKKIIYIHLDDKNGEHKYLMANPKIIKESTSKMYLKNGEGCLSVKKDHKGLSIRKSIVWVKGIDLFTNKEIEVKATDLLAACFQHEVDHNNNKFYYNRINESDPYYVEKNWEEI</sequence>
<reference key="1">
    <citation type="journal article" date="2002" name="Nucleic Acids Res.">
        <title>The complete genomic sequence of Mycoplasma penetrans, an intracellular bacterial pathogen in humans.</title>
        <authorList>
            <person name="Sasaki Y."/>
            <person name="Ishikawa J."/>
            <person name="Yamashita A."/>
            <person name="Oshima K."/>
            <person name="Kenri T."/>
            <person name="Furuya K."/>
            <person name="Yoshino C."/>
            <person name="Horino A."/>
            <person name="Shiba T."/>
            <person name="Sasaki T."/>
            <person name="Hattori M."/>
        </authorList>
    </citation>
    <scope>NUCLEOTIDE SEQUENCE [LARGE SCALE GENOMIC DNA]</scope>
    <source>
        <strain>HF-2</strain>
    </source>
</reference>
<comment type="function">
    <text evidence="1">Removes the formyl group from the N-terminal Met of newly synthesized proteins. Requires at least a dipeptide for an efficient rate of reaction. N-terminal L-methionine is a prerequisite for activity but the enzyme has broad specificity at other positions.</text>
</comment>
<comment type="catalytic activity">
    <reaction evidence="1">
        <text>N-terminal N-formyl-L-methionyl-[peptide] + H2O = N-terminal L-methionyl-[peptide] + formate</text>
        <dbReference type="Rhea" id="RHEA:24420"/>
        <dbReference type="Rhea" id="RHEA-COMP:10639"/>
        <dbReference type="Rhea" id="RHEA-COMP:10640"/>
        <dbReference type="ChEBI" id="CHEBI:15377"/>
        <dbReference type="ChEBI" id="CHEBI:15740"/>
        <dbReference type="ChEBI" id="CHEBI:49298"/>
        <dbReference type="ChEBI" id="CHEBI:64731"/>
        <dbReference type="EC" id="3.5.1.88"/>
    </reaction>
</comment>
<comment type="cofactor">
    <cofactor evidence="1">
        <name>Fe(2+)</name>
        <dbReference type="ChEBI" id="CHEBI:29033"/>
    </cofactor>
    <text evidence="1">Binds 1 Fe(2+) ion.</text>
</comment>
<comment type="similarity">
    <text evidence="1">Belongs to the polypeptide deformylase family.</text>
</comment>
<accession>Q8EVJ8</accession>
<organism>
    <name type="scientific">Malacoplasma penetrans (strain HF-2)</name>
    <name type="common">Mycoplasma penetrans</name>
    <dbReference type="NCBI Taxonomy" id="272633"/>
    <lineage>
        <taxon>Bacteria</taxon>
        <taxon>Bacillati</taxon>
        <taxon>Mycoplasmatota</taxon>
        <taxon>Mycoplasmoidales</taxon>
        <taxon>Mycoplasmoidaceae</taxon>
        <taxon>Malacoplasma</taxon>
    </lineage>
</organism>
<evidence type="ECO:0000255" key="1">
    <source>
        <dbReference type="HAMAP-Rule" id="MF_00163"/>
    </source>
</evidence>
<proteinExistence type="inferred from homology"/>
<feature type="chain" id="PRO_0000082802" description="Peptide deformylase">
    <location>
        <begin position="1"/>
        <end position="186"/>
    </location>
</feature>
<feature type="active site" evidence="1">
    <location>
        <position position="158"/>
    </location>
</feature>
<feature type="binding site" evidence="1">
    <location>
        <position position="113"/>
    </location>
    <ligand>
        <name>Fe cation</name>
        <dbReference type="ChEBI" id="CHEBI:24875"/>
    </ligand>
</feature>
<feature type="binding site" evidence="1">
    <location>
        <position position="157"/>
    </location>
    <ligand>
        <name>Fe cation</name>
        <dbReference type="ChEBI" id="CHEBI:24875"/>
    </ligand>
</feature>
<feature type="binding site" evidence="1">
    <location>
        <position position="161"/>
    </location>
    <ligand>
        <name>Fe cation</name>
        <dbReference type="ChEBI" id="CHEBI:24875"/>
    </ligand>
</feature>
<dbReference type="EC" id="3.5.1.88" evidence="1"/>
<dbReference type="EMBL" id="BA000026">
    <property type="protein sequence ID" value="BAC44355.1"/>
    <property type="molecule type" value="Genomic_DNA"/>
</dbReference>
<dbReference type="RefSeq" id="WP_011077388.1">
    <property type="nucleotide sequence ID" value="NC_004432.1"/>
</dbReference>
<dbReference type="SMR" id="Q8EVJ8"/>
<dbReference type="FunCoup" id="Q8EVJ8">
    <property type="interactions" value="9"/>
</dbReference>
<dbReference type="STRING" id="272633.gene:10731682"/>
<dbReference type="KEGG" id="mpe:MYPE5650"/>
<dbReference type="eggNOG" id="COG0242">
    <property type="taxonomic scope" value="Bacteria"/>
</dbReference>
<dbReference type="HOGENOM" id="CLU_061901_4_0_14"/>
<dbReference type="InParanoid" id="Q8EVJ8"/>
<dbReference type="Proteomes" id="UP000002522">
    <property type="component" value="Chromosome"/>
</dbReference>
<dbReference type="GO" id="GO:0046872">
    <property type="term" value="F:metal ion binding"/>
    <property type="evidence" value="ECO:0007669"/>
    <property type="project" value="UniProtKB-KW"/>
</dbReference>
<dbReference type="GO" id="GO:0042586">
    <property type="term" value="F:peptide deformylase activity"/>
    <property type="evidence" value="ECO:0007669"/>
    <property type="project" value="UniProtKB-UniRule"/>
</dbReference>
<dbReference type="GO" id="GO:0043686">
    <property type="term" value="P:co-translational protein modification"/>
    <property type="evidence" value="ECO:0007669"/>
    <property type="project" value="TreeGrafter"/>
</dbReference>
<dbReference type="GO" id="GO:0006412">
    <property type="term" value="P:translation"/>
    <property type="evidence" value="ECO:0007669"/>
    <property type="project" value="UniProtKB-UniRule"/>
</dbReference>
<dbReference type="CDD" id="cd00487">
    <property type="entry name" value="Pep_deformylase"/>
    <property type="match status" value="1"/>
</dbReference>
<dbReference type="Gene3D" id="3.90.45.10">
    <property type="entry name" value="Peptide deformylase"/>
    <property type="match status" value="1"/>
</dbReference>
<dbReference type="HAMAP" id="MF_00163">
    <property type="entry name" value="Pep_deformylase"/>
    <property type="match status" value="1"/>
</dbReference>
<dbReference type="InterPro" id="IPR023635">
    <property type="entry name" value="Peptide_deformylase"/>
</dbReference>
<dbReference type="InterPro" id="IPR036821">
    <property type="entry name" value="Peptide_deformylase_sf"/>
</dbReference>
<dbReference type="NCBIfam" id="TIGR00079">
    <property type="entry name" value="pept_deformyl"/>
    <property type="match status" value="1"/>
</dbReference>
<dbReference type="PANTHER" id="PTHR10458">
    <property type="entry name" value="PEPTIDE DEFORMYLASE"/>
    <property type="match status" value="1"/>
</dbReference>
<dbReference type="PANTHER" id="PTHR10458:SF22">
    <property type="entry name" value="PEPTIDE DEFORMYLASE"/>
    <property type="match status" value="1"/>
</dbReference>
<dbReference type="Pfam" id="PF01327">
    <property type="entry name" value="Pep_deformylase"/>
    <property type="match status" value="1"/>
</dbReference>
<dbReference type="PIRSF" id="PIRSF004749">
    <property type="entry name" value="Pep_def"/>
    <property type="match status" value="1"/>
</dbReference>
<dbReference type="PRINTS" id="PR01576">
    <property type="entry name" value="PDEFORMYLASE"/>
</dbReference>
<dbReference type="SUPFAM" id="SSF56420">
    <property type="entry name" value="Peptide deformylase"/>
    <property type="match status" value="1"/>
</dbReference>